<keyword id="KW-0285">Flavoprotein</keyword>
<keyword id="KW-0288">FMN</keyword>
<keyword id="KW-0520">NAD</keyword>
<keyword id="KW-0521">NADP</keyword>
<keyword id="KW-0560">Oxidoreductase</keyword>
<keyword id="KW-1185">Reference proteome</keyword>
<sequence length="197" mass="21863">MSGKLGDDALDILFRDARTHNGWKAEPVSDETLRALYDLMKWGPTSANCSPARIIFVKSKEAKEKLAPALSEGNLKKTMAAPVTAIIGYDVEFYERLPELFPHDPTAKNWFNWSKEWAEQTAFRNGSLQGAYFMIAARSLGLDCGPMSGFDMRKVDDAFFAGTTVKVNFLCNIGHGDPSALFARSPRLSFEDACKII</sequence>
<protein>
    <recommendedName>
        <fullName evidence="1">Putative NADH dehydrogenase/NAD(P)H nitroreductase Plav_3612</fullName>
        <ecNumber evidence="1">1.-.-.-</ecNumber>
    </recommendedName>
</protein>
<dbReference type="EC" id="1.-.-.-" evidence="1"/>
<dbReference type="EMBL" id="CP000774">
    <property type="protein sequence ID" value="ABS65210.1"/>
    <property type="molecule type" value="Genomic_DNA"/>
</dbReference>
<dbReference type="RefSeq" id="WP_012112470.1">
    <property type="nucleotide sequence ID" value="NC_009719.1"/>
</dbReference>
<dbReference type="SMR" id="A7HZ77"/>
<dbReference type="STRING" id="402881.Plav_3612"/>
<dbReference type="KEGG" id="pla:Plav_3612"/>
<dbReference type="eggNOG" id="COG0778">
    <property type="taxonomic scope" value="Bacteria"/>
</dbReference>
<dbReference type="HOGENOM" id="CLU_084441_0_0_5"/>
<dbReference type="OrthoDB" id="9784375at2"/>
<dbReference type="Proteomes" id="UP000006377">
    <property type="component" value="Chromosome"/>
</dbReference>
<dbReference type="GO" id="GO:0016491">
    <property type="term" value="F:oxidoreductase activity"/>
    <property type="evidence" value="ECO:0007669"/>
    <property type="project" value="UniProtKB-UniRule"/>
</dbReference>
<dbReference type="CDD" id="cd02148">
    <property type="entry name" value="RutE-like"/>
    <property type="match status" value="1"/>
</dbReference>
<dbReference type="Gene3D" id="3.40.109.10">
    <property type="entry name" value="NADH Oxidase"/>
    <property type="match status" value="1"/>
</dbReference>
<dbReference type="HAMAP" id="MF_01204">
    <property type="entry name" value="Oxidoreductase_RutE_HadB"/>
    <property type="match status" value="1"/>
</dbReference>
<dbReference type="InterPro" id="IPR029479">
    <property type="entry name" value="Nitroreductase"/>
</dbReference>
<dbReference type="InterPro" id="IPR000415">
    <property type="entry name" value="Nitroreductase-like"/>
</dbReference>
<dbReference type="InterPro" id="IPR050461">
    <property type="entry name" value="Nitroreductase_HadB/RutE"/>
</dbReference>
<dbReference type="InterPro" id="IPR023936">
    <property type="entry name" value="RutE-like"/>
</dbReference>
<dbReference type="NCBIfam" id="NF003768">
    <property type="entry name" value="PRK05365.1"/>
    <property type="match status" value="1"/>
</dbReference>
<dbReference type="PANTHER" id="PTHR43543">
    <property type="entry name" value="MALONIC SEMIALDEHYDE REDUCTASE RUTE-RELATED"/>
    <property type="match status" value="1"/>
</dbReference>
<dbReference type="PANTHER" id="PTHR43543:SF1">
    <property type="entry name" value="MALONIC SEMIALDEHYDE REDUCTASE RUTE-RELATED"/>
    <property type="match status" value="1"/>
</dbReference>
<dbReference type="Pfam" id="PF00881">
    <property type="entry name" value="Nitroreductase"/>
    <property type="match status" value="1"/>
</dbReference>
<dbReference type="SUPFAM" id="SSF55469">
    <property type="entry name" value="FMN-dependent nitroreductase-like"/>
    <property type="match status" value="1"/>
</dbReference>
<gene>
    <name type="ordered locus">Plav_3612</name>
</gene>
<proteinExistence type="inferred from homology"/>
<organism>
    <name type="scientific">Parvibaculum lavamentivorans (strain DS-1 / DSM 13023 / NCIMB 13966)</name>
    <dbReference type="NCBI Taxonomy" id="402881"/>
    <lineage>
        <taxon>Bacteria</taxon>
        <taxon>Pseudomonadati</taxon>
        <taxon>Pseudomonadota</taxon>
        <taxon>Alphaproteobacteria</taxon>
        <taxon>Hyphomicrobiales</taxon>
        <taxon>Parvibaculaceae</taxon>
        <taxon>Parvibaculum</taxon>
    </lineage>
</organism>
<accession>A7HZ77</accession>
<feature type="chain" id="PRO_1000073103" description="Putative NADH dehydrogenase/NAD(P)H nitroreductase Plav_3612">
    <location>
        <begin position="1"/>
        <end position="197"/>
    </location>
</feature>
<evidence type="ECO:0000255" key="1">
    <source>
        <dbReference type="HAMAP-Rule" id="MF_01204"/>
    </source>
</evidence>
<comment type="cofactor">
    <cofactor evidence="1">
        <name>FMN</name>
        <dbReference type="ChEBI" id="CHEBI:58210"/>
    </cofactor>
</comment>
<comment type="similarity">
    <text evidence="1">Belongs to the nitroreductase family. HadB/RutE subfamily.</text>
</comment>
<reference key="1">
    <citation type="journal article" date="2011" name="Stand. Genomic Sci.">
        <title>Complete genome sequence of Parvibaculum lavamentivorans type strain (DS-1(T)).</title>
        <authorList>
            <person name="Schleheck D."/>
            <person name="Weiss M."/>
            <person name="Pitluck S."/>
            <person name="Bruce D."/>
            <person name="Land M.L."/>
            <person name="Han S."/>
            <person name="Saunders E."/>
            <person name="Tapia R."/>
            <person name="Detter C."/>
            <person name="Brettin T."/>
            <person name="Han J."/>
            <person name="Woyke T."/>
            <person name="Goodwin L."/>
            <person name="Pennacchio L."/>
            <person name="Nolan M."/>
            <person name="Cook A.M."/>
            <person name="Kjelleberg S."/>
            <person name="Thomas T."/>
        </authorList>
    </citation>
    <scope>NUCLEOTIDE SEQUENCE [LARGE SCALE GENOMIC DNA]</scope>
    <source>
        <strain>DS-1 / DSM 13023 / NCIMB 13966</strain>
    </source>
</reference>
<name>Y3612_PARL1</name>